<reference key="1">
    <citation type="submission" date="2002-12" db="EMBL/GenBank/DDBJ databases">
        <title>Identification of genes required for adventurous gliding motility in Myxococcus xanthus with the transposable element mariner.</title>
        <authorList>
            <person name="Hartzell P.L."/>
            <person name="Youderian P.A."/>
        </authorList>
    </citation>
    <scope>NUCLEOTIDE SEQUENCE [GENOMIC DNA]</scope>
</reference>
<feature type="signal peptide" evidence="1">
    <location>
        <begin position="1"/>
        <end position="18"/>
    </location>
</feature>
<feature type="chain" id="PRO_0000034666" description="Tol-Pal system protein TolB" evidence="1">
    <location>
        <begin position="19"/>
        <end position="431"/>
    </location>
</feature>
<feature type="region of interest" description="Disordered" evidence="2">
    <location>
        <begin position="410"/>
        <end position="431"/>
    </location>
</feature>
<dbReference type="EMBL" id="AY204462">
    <property type="protein sequence ID" value="AAO22855.1"/>
    <property type="molecule type" value="Genomic_DNA"/>
</dbReference>
<dbReference type="RefSeq" id="WP_011555707.1">
    <property type="nucleotide sequence ID" value="NZ_JABFNQ010000069.1"/>
</dbReference>
<dbReference type="SMR" id="Q84FF7"/>
<dbReference type="GeneID" id="41362999"/>
<dbReference type="OMA" id="VREPSWG"/>
<dbReference type="GO" id="GO:0042597">
    <property type="term" value="C:periplasmic space"/>
    <property type="evidence" value="ECO:0007669"/>
    <property type="project" value="UniProtKB-SubCell"/>
</dbReference>
<dbReference type="GO" id="GO:0051301">
    <property type="term" value="P:cell division"/>
    <property type="evidence" value="ECO:0007669"/>
    <property type="project" value="UniProtKB-KW"/>
</dbReference>
<dbReference type="GO" id="GO:0017038">
    <property type="term" value="P:protein import"/>
    <property type="evidence" value="ECO:0007669"/>
    <property type="project" value="InterPro"/>
</dbReference>
<dbReference type="Gene3D" id="2.120.10.30">
    <property type="entry name" value="TolB, C-terminal domain"/>
    <property type="match status" value="2"/>
</dbReference>
<dbReference type="Gene3D" id="3.40.50.10070">
    <property type="entry name" value="TolB, N-terminal domain"/>
    <property type="match status" value="1"/>
</dbReference>
<dbReference type="HAMAP" id="MF_00671">
    <property type="entry name" value="TolB"/>
    <property type="match status" value="1"/>
</dbReference>
<dbReference type="InterPro" id="IPR011042">
    <property type="entry name" value="6-blade_b-propeller_TolB-like"/>
</dbReference>
<dbReference type="InterPro" id="IPR011659">
    <property type="entry name" value="PD40"/>
</dbReference>
<dbReference type="InterPro" id="IPR014167">
    <property type="entry name" value="Tol-Pal_TolB"/>
</dbReference>
<dbReference type="InterPro" id="IPR007195">
    <property type="entry name" value="TolB_N"/>
</dbReference>
<dbReference type="NCBIfam" id="TIGR02800">
    <property type="entry name" value="propeller_TolB"/>
    <property type="match status" value="1"/>
</dbReference>
<dbReference type="PANTHER" id="PTHR36842:SF1">
    <property type="entry name" value="PROTEIN TOLB"/>
    <property type="match status" value="1"/>
</dbReference>
<dbReference type="PANTHER" id="PTHR36842">
    <property type="entry name" value="PROTEIN TOLB HOMOLOG"/>
    <property type="match status" value="1"/>
</dbReference>
<dbReference type="Pfam" id="PF07676">
    <property type="entry name" value="PD40"/>
    <property type="match status" value="4"/>
</dbReference>
<dbReference type="Pfam" id="PF04052">
    <property type="entry name" value="TolB_N"/>
    <property type="match status" value="1"/>
</dbReference>
<dbReference type="SUPFAM" id="SSF52964">
    <property type="entry name" value="TolB, N-terminal domain"/>
    <property type="match status" value="1"/>
</dbReference>
<dbReference type="SUPFAM" id="SSF69304">
    <property type="entry name" value="Tricorn protease N-terminal domain"/>
    <property type="match status" value="1"/>
</dbReference>
<gene>
    <name evidence="1" type="primary">tolB</name>
    <name type="synonym">aglW</name>
</gene>
<protein>
    <recommendedName>
        <fullName evidence="1">Tol-Pal system protein TolB</fullName>
    </recommendedName>
    <alternativeName>
        <fullName>Adventurous gliding motility protein W</fullName>
    </alternativeName>
</protein>
<sequence>MKALLLSLLLLLPVVALAQAPTIEISGANFRPLPVAVPAPLTQNDGAKALVAPFDSAFSFDLTASGILQVLDRKGFTADAKEGMAAASINFSRWADVGAEALVKVSLAQDGGVLRGELRLFNVGTGREDLKVSKDAPADNASLLAHRLADALYRHFTREPSPFLSRITYVRKAGTNRDVYVADWDGGNARALTKGGINILPALSQDGSQVAFTTYRKNRPDIYVQSPGGEAKAVISGGQMATGAAFSPDGKRIAYSLAEGESAQVYVANADGSGARALTDTPYGLNTSPTWSPDGKRIAFVSNRGGSPQVYIMNADGTGVRRLTFQGNYNQTPDWSPRGDLIVFTARDERNAFDLFTVSVETGKVTRLTQDQGSNEEPAFSPNGRLIVFTSTRNGGSQLYVMTADGNNQLPLRTEKGTYQTPDWSPLPQAQ</sequence>
<evidence type="ECO:0000255" key="1">
    <source>
        <dbReference type="HAMAP-Rule" id="MF_00671"/>
    </source>
</evidence>
<evidence type="ECO:0000256" key="2">
    <source>
        <dbReference type="SAM" id="MobiDB-lite"/>
    </source>
</evidence>
<keyword id="KW-0131">Cell cycle</keyword>
<keyword id="KW-0132">Cell division</keyword>
<keyword id="KW-0574">Periplasm</keyword>
<keyword id="KW-0732">Signal</keyword>
<accession>Q84FF7</accession>
<comment type="function">
    <text evidence="1">Part of the Tol-Pal system, which plays a role in outer membrane invagination during cell division and is important for maintaining outer membrane integrity.</text>
</comment>
<comment type="subunit">
    <text evidence="1">The Tol-Pal system is composed of five core proteins: the inner membrane proteins TolA, TolQ and TolR, the periplasmic protein TolB and the outer membrane protein Pal. They form a network linking the inner and outer membranes and the peptidoglycan layer.</text>
</comment>
<comment type="subcellular location">
    <subcellularLocation>
        <location evidence="1">Periplasm</location>
    </subcellularLocation>
</comment>
<comment type="similarity">
    <text evidence="1">Belongs to the TolB family.</text>
</comment>
<name>TOLB_MYXXA</name>
<proteinExistence type="inferred from homology"/>
<organism>
    <name type="scientific">Myxococcus xanthus</name>
    <dbReference type="NCBI Taxonomy" id="34"/>
    <lineage>
        <taxon>Bacteria</taxon>
        <taxon>Pseudomonadati</taxon>
        <taxon>Myxococcota</taxon>
        <taxon>Myxococcia</taxon>
        <taxon>Myxococcales</taxon>
        <taxon>Cystobacterineae</taxon>
        <taxon>Myxococcaceae</taxon>
        <taxon>Myxococcus</taxon>
    </lineage>
</organism>